<gene>
    <name evidence="1" type="primary">psbT</name>
    <name type="ordered locus">PMT_1666</name>
</gene>
<sequence>MDAFAYTLLMTLVVATLFFAVAFRDPPKIGKDSGK</sequence>
<feature type="chain" id="PRO_0000218002" description="Photosystem II reaction center protein T">
    <location>
        <begin position="1"/>
        <end position="35"/>
    </location>
</feature>
<feature type="transmembrane region" description="Helical" evidence="1">
    <location>
        <begin position="3"/>
        <end position="23"/>
    </location>
</feature>
<dbReference type="EMBL" id="BX548175">
    <property type="protein sequence ID" value="CAE21841.1"/>
    <property type="molecule type" value="Genomic_DNA"/>
</dbReference>
<dbReference type="RefSeq" id="WP_011131033.1">
    <property type="nucleotide sequence ID" value="NC_005071.1"/>
</dbReference>
<dbReference type="SMR" id="Q7V5A6"/>
<dbReference type="KEGG" id="pmt:PMT_1666"/>
<dbReference type="HOGENOM" id="CLU_217078_1_0_3"/>
<dbReference type="OrthoDB" id="427659at2"/>
<dbReference type="Proteomes" id="UP000001423">
    <property type="component" value="Chromosome"/>
</dbReference>
<dbReference type="GO" id="GO:0009539">
    <property type="term" value="C:photosystem II reaction center"/>
    <property type="evidence" value="ECO:0007669"/>
    <property type="project" value="InterPro"/>
</dbReference>
<dbReference type="GO" id="GO:0031676">
    <property type="term" value="C:plasma membrane-derived thylakoid membrane"/>
    <property type="evidence" value="ECO:0007669"/>
    <property type="project" value="UniProtKB-SubCell"/>
</dbReference>
<dbReference type="GO" id="GO:0015979">
    <property type="term" value="P:photosynthesis"/>
    <property type="evidence" value="ECO:0007669"/>
    <property type="project" value="UniProtKB-UniRule"/>
</dbReference>
<dbReference type="HAMAP" id="MF_00808">
    <property type="entry name" value="PSII_PsbT"/>
    <property type="match status" value="1"/>
</dbReference>
<dbReference type="InterPro" id="IPR001743">
    <property type="entry name" value="PSII_PsbT"/>
</dbReference>
<dbReference type="InterPro" id="IPR037268">
    <property type="entry name" value="PSII_PsbT_sf"/>
</dbReference>
<dbReference type="NCBIfam" id="NF008825">
    <property type="entry name" value="PRK11875.1"/>
    <property type="match status" value="1"/>
</dbReference>
<dbReference type="Pfam" id="PF01405">
    <property type="entry name" value="PsbT"/>
    <property type="match status" value="1"/>
</dbReference>
<dbReference type="SUPFAM" id="SSF161029">
    <property type="entry name" value="Photosystem II reaction center protein T, PsbT"/>
    <property type="match status" value="1"/>
</dbReference>
<evidence type="ECO:0000255" key="1">
    <source>
        <dbReference type="HAMAP-Rule" id="MF_00808"/>
    </source>
</evidence>
<evidence type="ECO:0000305" key="2"/>
<accession>Q7V5A6</accession>
<organism>
    <name type="scientific">Prochlorococcus marinus (strain MIT 9313)</name>
    <dbReference type="NCBI Taxonomy" id="74547"/>
    <lineage>
        <taxon>Bacteria</taxon>
        <taxon>Bacillati</taxon>
        <taxon>Cyanobacteriota</taxon>
        <taxon>Cyanophyceae</taxon>
        <taxon>Synechococcales</taxon>
        <taxon>Prochlorococcaceae</taxon>
        <taxon>Prochlorococcus</taxon>
    </lineage>
</organism>
<comment type="function">
    <text evidence="1">Found at the monomer-monomer interface of the photosystem II (PS II) dimer, plays a role in assembly and dimerization of PSII. PSII is a light-driven water plastoquinone oxidoreductase, using light energy to abstract electrons from H(2)O, generating a proton gradient subsequently used for ATP formation.</text>
</comment>
<comment type="subunit">
    <text evidence="2">PSII is composed of 1 copy each of membrane proteins PsbA, PsbB, PsbC, PsbD, PsbE, PsbF, PsbH, PsbI, PsbJ, PsbK, PsbL, PsbM, PsbT, PsbX, PsbY, Psb30/Ycf12, peripheral proteins PsbO, CyanoQ (PsbQ), PsbU, PsbV and a large number of cofactors. It forms dimeric complexes.</text>
</comment>
<comment type="subcellular location">
    <subcellularLocation>
        <location evidence="1">Cellular thylakoid membrane</location>
        <topology evidence="1">Single-pass membrane protein</topology>
    </subcellularLocation>
</comment>
<comment type="similarity">
    <text evidence="1">Belongs to the PsbT family.</text>
</comment>
<protein>
    <recommendedName>
        <fullName evidence="1">Photosystem II reaction center protein T</fullName>
        <shortName evidence="1">PSII-T</shortName>
    </recommendedName>
</protein>
<keyword id="KW-0472">Membrane</keyword>
<keyword id="KW-0602">Photosynthesis</keyword>
<keyword id="KW-0604">Photosystem II</keyword>
<keyword id="KW-1185">Reference proteome</keyword>
<keyword id="KW-0793">Thylakoid</keyword>
<keyword id="KW-0812">Transmembrane</keyword>
<keyword id="KW-1133">Transmembrane helix</keyword>
<name>PSBT_PROMM</name>
<proteinExistence type="inferred from homology"/>
<reference key="1">
    <citation type="journal article" date="2003" name="Nature">
        <title>Genome divergence in two Prochlorococcus ecotypes reflects oceanic niche differentiation.</title>
        <authorList>
            <person name="Rocap G."/>
            <person name="Larimer F.W."/>
            <person name="Lamerdin J.E."/>
            <person name="Malfatti S."/>
            <person name="Chain P."/>
            <person name="Ahlgren N.A."/>
            <person name="Arellano A."/>
            <person name="Coleman M."/>
            <person name="Hauser L."/>
            <person name="Hess W.R."/>
            <person name="Johnson Z.I."/>
            <person name="Land M.L."/>
            <person name="Lindell D."/>
            <person name="Post A.F."/>
            <person name="Regala W."/>
            <person name="Shah M."/>
            <person name="Shaw S.L."/>
            <person name="Steglich C."/>
            <person name="Sullivan M.B."/>
            <person name="Ting C.S."/>
            <person name="Tolonen A."/>
            <person name="Webb E.A."/>
            <person name="Zinser E.R."/>
            <person name="Chisholm S.W."/>
        </authorList>
    </citation>
    <scope>NUCLEOTIDE SEQUENCE [LARGE SCALE GENOMIC DNA]</scope>
    <source>
        <strain>MIT 9313</strain>
    </source>
</reference>